<reference key="1">
    <citation type="submission" date="2008-05" db="EMBL/GenBank/DDBJ databases">
        <title>Complete sequence of Rhodopseudomonas palustris TIE-1.</title>
        <authorList>
            <consortium name="US DOE Joint Genome Institute"/>
            <person name="Lucas S."/>
            <person name="Copeland A."/>
            <person name="Lapidus A."/>
            <person name="Glavina del Rio T."/>
            <person name="Dalin E."/>
            <person name="Tice H."/>
            <person name="Pitluck S."/>
            <person name="Chain P."/>
            <person name="Malfatti S."/>
            <person name="Shin M."/>
            <person name="Vergez L."/>
            <person name="Lang D."/>
            <person name="Schmutz J."/>
            <person name="Larimer F."/>
            <person name="Land M."/>
            <person name="Hauser L."/>
            <person name="Kyrpides N."/>
            <person name="Mikhailova N."/>
            <person name="Emerson D."/>
            <person name="Newman D.K."/>
            <person name="Roden E."/>
            <person name="Richardson P."/>
        </authorList>
    </citation>
    <scope>NUCLEOTIDE SEQUENCE [LARGE SCALE GENOMIC DNA]</scope>
    <source>
        <strain>TIE-1</strain>
    </source>
</reference>
<gene>
    <name evidence="1" type="primary">lepA</name>
    <name type="ordered locus">Rpal_0355</name>
</gene>
<organism>
    <name type="scientific">Rhodopseudomonas palustris (strain TIE-1)</name>
    <dbReference type="NCBI Taxonomy" id="395960"/>
    <lineage>
        <taxon>Bacteria</taxon>
        <taxon>Pseudomonadati</taxon>
        <taxon>Pseudomonadota</taxon>
        <taxon>Alphaproteobacteria</taxon>
        <taxon>Hyphomicrobiales</taxon>
        <taxon>Nitrobacteraceae</taxon>
        <taxon>Rhodopseudomonas</taxon>
    </lineage>
</organism>
<feature type="chain" id="PRO_1000092435" description="Elongation factor 4">
    <location>
        <begin position="1"/>
        <end position="603"/>
    </location>
</feature>
<feature type="domain" description="tr-type G">
    <location>
        <begin position="7"/>
        <end position="191"/>
    </location>
</feature>
<feature type="binding site" evidence="1">
    <location>
        <begin position="19"/>
        <end position="24"/>
    </location>
    <ligand>
        <name>GTP</name>
        <dbReference type="ChEBI" id="CHEBI:37565"/>
    </ligand>
</feature>
<feature type="binding site" evidence="1">
    <location>
        <begin position="138"/>
        <end position="141"/>
    </location>
    <ligand>
        <name>GTP</name>
        <dbReference type="ChEBI" id="CHEBI:37565"/>
    </ligand>
</feature>
<keyword id="KW-0997">Cell inner membrane</keyword>
<keyword id="KW-1003">Cell membrane</keyword>
<keyword id="KW-0342">GTP-binding</keyword>
<keyword id="KW-0378">Hydrolase</keyword>
<keyword id="KW-0472">Membrane</keyword>
<keyword id="KW-0547">Nucleotide-binding</keyword>
<keyword id="KW-0648">Protein biosynthesis</keyword>
<dbReference type="EC" id="3.6.5.n1" evidence="1"/>
<dbReference type="EMBL" id="CP001096">
    <property type="protein sequence ID" value="ACE98915.1"/>
    <property type="molecule type" value="Genomic_DNA"/>
</dbReference>
<dbReference type="RefSeq" id="WP_011155920.1">
    <property type="nucleotide sequence ID" value="NC_011004.1"/>
</dbReference>
<dbReference type="SMR" id="B3Q991"/>
<dbReference type="GeneID" id="66891363"/>
<dbReference type="KEGG" id="rpt:Rpal_0355"/>
<dbReference type="HOGENOM" id="CLU_009995_3_3_5"/>
<dbReference type="OrthoDB" id="9802948at2"/>
<dbReference type="Proteomes" id="UP000001725">
    <property type="component" value="Chromosome"/>
</dbReference>
<dbReference type="GO" id="GO:0005886">
    <property type="term" value="C:plasma membrane"/>
    <property type="evidence" value="ECO:0007669"/>
    <property type="project" value="UniProtKB-SubCell"/>
</dbReference>
<dbReference type="GO" id="GO:0005525">
    <property type="term" value="F:GTP binding"/>
    <property type="evidence" value="ECO:0007669"/>
    <property type="project" value="UniProtKB-UniRule"/>
</dbReference>
<dbReference type="GO" id="GO:0003924">
    <property type="term" value="F:GTPase activity"/>
    <property type="evidence" value="ECO:0007669"/>
    <property type="project" value="UniProtKB-UniRule"/>
</dbReference>
<dbReference type="GO" id="GO:0097216">
    <property type="term" value="F:guanosine tetraphosphate binding"/>
    <property type="evidence" value="ECO:0007669"/>
    <property type="project" value="UniProtKB-ARBA"/>
</dbReference>
<dbReference type="GO" id="GO:0043022">
    <property type="term" value="F:ribosome binding"/>
    <property type="evidence" value="ECO:0007669"/>
    <property type="project" value="UniProtKB-UniRule"/>
</dbReference>
<dbReference type="GO" id="GO:0003746">
    <property type="term" value="F:translation elongation factor activity"/>
    <property type="evidence" value="ECO:0007669"/>
    <property type="project" value="UniProtKB-UniRule"/>
</dbReference>
<dbReference type="GO" id="GO:0045727">
    <property type="term" value="P:positive regulation of translation"/>
    <property type="evidence" value="ECO:0007669"/>
    <property type="project" value="UniProtKB-UniRule"/>
</dbReference>
<dbReference type="CDD" id="cd16260">
    <property type="entry name" value="EF4_III"/>
    <property type="match status" value="1"/>
</dbReference>
<dbReference type="CDD" id="cd01890">
    <property type="entry name" value="LepA"/>
    <property type="match status" value="1"/>
</dbReference>
<dbReference type="CDD" id="cd03709">
    <property type="entry name" value="lepA_C"/>
    <property type="match status" value="1"/>
</dbReference>
<dbReference type="FunFam" id="3.40.50.300:FF:000078">
    <property type="entry name" value="Elongation factor 4"/>
    <property type="match status" value="1"/>
</dbReference>
<dbReference type="FunFam" id="2.40.30.10:FF:000015">
    <property type="entry name" value="Translation factor GUF1, mitochondrial"/>
    <property type="match status" value="1"/>
</dbReference>
<dbReference type="FunFam" id="3.30.70.240:FF:000007">
    <property type="entry name" value="Translation factor GUF1, mitochondrial"/>
    <property type="match status" value="1"/>
</dbReference>
<dbReference type="FunFam" id="3.30.70.2570:FF:000001">
    <property type="entry name" value="Translation factor GUF1, mitochondrial"/>
    <property type="match status" value="1"/>
</dbReference>
<dbReference type="FunFam" id="3.30.70.870:FF:000004">
    <property type="entry name" value="Translation factor GUF1, mitochondrial"/>
    <property type="match status" value="1"/>
</dbReference>
<dbReference type="Gene3D" id="3.30.70.240">
    <property type="match status" value="1"/>
</dbReference>
<dbReference type="Gene3D" id="3.30.70.2570">
    <property type="entry name" value="Elongation factor 4, C-terminal domain"/>
    <property type="match status" value="1"/>
</dbReference>
<dbReference type="Gene3D" id="3.30.70.870">
    <property type="entry name" value="Elongation Factor G (Translational Gtpase), domain 3"/>
    <property type="match status" value="1"/>
</dbReference>
<dbReference type="Gene3D" id="3.40.50.300">
    <property type="entry name" value="P-loop containing nucleotide triphosphate hydrolases"/>
    <property type="match status" value="1"/>
</dbReference>
<dbReference type="Gene3D" id="2.40.30.10">
    <property type="entry name" value="Translation factors"/>
    <property type="match status" value="1"/>
</dbReference>
<dbReference type="HAMAP" id="MF_00071">
    <property type="entry name" value="LepA"/>
    <property type="match status" value="1"/>
</dbReference>
<dbReference type="InterPro" id="IPR006297">
    <property type="entry name" value="EF-4"/>
</dbReference>
<dbReference type="InterPro" id="IPR035647">
    <property type="entry name" value="EFG_III/V"/>
</dbReference>
<dbReference type="InterPro" id="IPR000640">
    <property type="entry name" value="EFG_V-like"/>
</dbReference>
<dbReference type="InterPro" id="IPR004161">
    <property type="entry name" value="EFTu-like_2"/>
</dbReference>
<dbReference type="InterPro" id="IPR031157">
    <property type="entry name" value="G_TR_CS"/>
</dbReference>
<dbReference type="InterPro" id="IPR038363">
    <property type="entry name" value="LepA_C_sf"/>
</dbReference>
<dbReference type="InterPro" id="IPR013842">
    <property type="entry name" value="LepA_CTD"/>
</dbReference>
<dbReference type="InterPro" id="IPR035654">
    <property type="entry name" value="LepA_IV"/>
</dbReference>
<dbReference type="InterPro" id="IPR027417">
    <property type="entry name" value="P-loop_NTPase"/>
</dbReference>
<dbReference type="InterPro" id="IPR005225">
    <property type="entry name" value="Small_GTP-bd"/>
</dbReference>
<dbReference type="InterPro" id="IPR000795">
    <property type="entry name" value="T_Tr_GTP-bd_dom"/>
</dbReference>
<dbReference type="NCBIfam" id="TIGR01393">
    <property type="entry name" value="lepA"/>
    <property type="match status" value="1"/>
</dbReference>
<dbReference type="NCBIfam" id="TIGR00231">
    <property type="entry name" value="small_GTP"/>
    <property type="match status" value="1"/>
</dbReference>
<dbReference type="PANTHER" id="PTHR43512:SF4">
    <property type="entry name" value="TRANSLATION FACTOR GUF1 HOMOLOG, CHLOROPLASTIC"/>
    <property type="match status" value="1"/>
</dbReference>
<dbReference type="PANTHER" id="PTHR43512">
    <property type="entry name" value="TRANSLATION FACTOR GUF1-RELATED"/>
    <property type="match status" value="1"/>
</dbReference>
<dbReference type="Pfam" id="PF00679">
    <property type="entry name" value="EFG_C"/>
    <property type="match status" value="1"/>
</dbReference>
<dbReference type="Pfam" id="PF00009">
    <property type="entry name" value="GTP_EFTU"/>
    <property type="match status" value="1"/>
</dbReference>
<dbReference type="Pfam" id="PF03144">
    <property type="entry name" value="GTP_EFTU_D2"/>
    <property type="match status" value="1"/>
</dbReference>
<dbReference type="Pfam" id="PF06421">
    <property type="entry name" value="LepA_C"/>
    <property type="match status" value="1"/>
</dbReference>
<dbReference type="PRINTS" id="PR00315">
    <property type="entry name" value="ELONGATNFCT"/>
</dbReference>
<dbReference type="SMART" id="SM00838">
    <property type="entry name" value="EFG_C"/>
    <property type="match status" value="1"/>
</dbReference>
<dbReference type="SUPFAM" id="SSF54980">
    <property type="entry name" value="EF-G C-terminal domain-like"/>
    <property type="match status" value="2"/>
</dbReference>
<dbReference type="SUPFAM" id="SSF52540">
    <property type="entry name" value="P-loop containing nucleoside triphosphate hydrolases"/>
    <property type="match status" value="1"/>
</dbReference>
<dbReference type="PROSITE" id="PS00301">
    <property type="entry name" value="G_TR_1"/>
    <property type="match status" value="1"/>
</dbReference>
<dbReference type="PROSITE" id="PS51722">
    <property type="entry name" value="G_TR_2"/>
    <property type="match status" value="1"/>
</dbReference>
<protein>
    <recommendedName>
        <fullName evidence="1">Elongation factor 4</fullName>
        <shortName evidence="1">EF-4</shortName>
        <ecNumber evidence="1">3.6.5.n1</ecNumber>
    </recommendedName>
    <alternativeName>
        <fullName evidence="1">Ribosomal back-translocase LepA</fullName>
    </alternativeName>
</protein>
<proteinExistence type="inferred from homology"/>
<accession>B3Q991</accession>
<sequence>MTTAPIDNIRNFSIVAHIDHGKSTLADRLIQITGGMSDREMAGKEQVLDSMDIERERGITIKAQTVRLKYRAHDGKDYIFNLMDTPGHVDFAYEVSRSLAACEGSLLVVDASQGVEAQTLANVYHALDAGHEIVPVLNKVDLPAAEPEKIKQQIEDVIGLDASDAVMISAKTGLGVPDVLEAIVTRLPPPKGDRDATLKALLVDSWYDVYLGVVVLVRVVDGVLKKGQRIRMMGTGAAYDVERVGYFTPKMVNVEELGPGEVGFITAAIKEVADTRVGDTITDDKKPVTDMLPGFKPAIPVVFCGLFPVDADDFETLRAAMGKLRLNDASFSFEMETSAALGFGFRCGFLGLLHLEIIQERLSREFDLDLIATAPSVIYKMKLTDGTEMEIHNPVDMPDVVKIAEIEEPWIEATILTPDEYLGSVLKLCQDRRGNQKELTYVGARAMVKYDLPLNEVVFDFYDRLKSVSKGYASFDYHLTDYKPADLVKMQILVNAEPVDALSMLVHRTRAEGRGRAMVEKMKELIPPHMFQIPIQAAIGGKVIARETVRALRKDVTAKCYGGDITRKRKLLEKQKEGKKKMRQFGKVDIPQEAFIAALKVDS</sequence>
<comment type="function">
    <text evidence="1">Required for accurate and efficient protein synthesis under certain stress conditions. May act as a fidelity factor of the translation reaction, by catalyzing a one-codon backward translocation of tRNAs on improperly translocated ribosomes. Back-translocation proceeds from a post-translocation (POST) complex to a pre-translocation (PRE) complex, thus giving elongation factor G a second chance to translocate the tRNAs correctly. Binds to ribosomes in a GTP-dependent manner.</text>
</comment>
<comment type="catalytic activity">
    <reaction evidence="1">
        <text>GTP + H2O = GDP + phosphate + H(+)</text>
        <dbReference type="Rhea" id="RHEA:19669"/>
        <dbReference type="ChEBI" id="CHEBI:15377"/>
        <dbReference type="ChEBI" id="CHEBI:15378"/>
        <dbReference type="ChEBI" id="CHEBI:37565"/>
        <dbReference type="ChEBI" id="CHEBI:43474"/>
        <dbReference type="ChEBI" id="CHEBI:58189"/>
        <dbReference type="EC" id="3.6.5.n1"/>
    </reaction>
</comment>
<comment type="subcellular location">
    <subcellularLocation>
        <location evidence="1">Cell inner membrane</location>
        <topology evidence="1">Peripheral membrane protein</topology>
        <orientation evidence="1">Cytoplasmic side</orientation>
    </subcellularLocation>
</comment>
<comment type="similarity">
    <text evidence="1">Belongs to the TRAFAC class translation factor GTPase superfamily. Classic translation factor GTPase family. LepA subfamily.</text>
</comment>
<name>LEPA_RHOPT</name>
<evidence type="ECO:0000255" key="1">
    <source>
        <dbReference type="HAMAP-Rule" id="MF_00071"/>
    </source>
</evidence>